<accession>Q21SZ4</accession>
<dbReference type="EC" id="3.5.1.5" evidence="1"/>
<dbReference type="EMBL" id="CP000267">
    <property type="protein sequence ID" value="ABD71109.1"/>
    <property type="molecule type" value="Genomic_DNA"/>
</dbReference>
<dbReference type="RefSeq" id="WP_011465672.1">
    <property type="nucleotide sequence ID" value="NC_007908.1"/>
</dbReference>
<dbReference type="SMR" id="Q21SZ4"/>
<dbReference type="STRING" id="338969.Rfer_3400"/>
<dbReference type="KEGG" id="rfr:Rfer_3400"/>
<dbReference type="eggNOG" id="COG0832">
    <property type="taxonomic scope" value="Bacteria"/>
</dbReference>
<dbReference type="HOGENOM" id="CLU_129707_1_1_4"/>
<dbReference type="OrthoDB" id="9797217at2"/>
<dbReference type="UniPathway" id="UPA00258">
    <property type="reaction ID" value="UER00370"/>
</dbReference>
<dbReference type="Proteomes" id="UP000008332">
    <property type="component" value="Chromosome"/>
</dbReference>
<dbReference type="GO" id="GO:0035550">
    <property type="term" value="C:urease complex"/>
    <property type="evidence" value="ECO:0007669"/>
    <property type="project" value="InterPro"/>
</dbReference>
<dbReference type="GO" id="GO:0009039">
    <property type="term" value="F:urease activity"/>
    <property type="evidence" value="ECO:0007669"/>
    <property type="project" value="UniProtKB-UniRule"/>
</dbReference>
<dbReference type="GO" id="GO:0043419">
    <property type="term" value="P:urea catabolic process"/>
    <property type="evidence" value="ECO:0007669"/>
    <property type="project" value="UniProtKB-UniRule"/>
</dbReference>
<dbReference type="CDD" id="cd00407">
    <property type="entry name" value="Urease_beta"/>
    <property type="match status" value="1"/>
</dbReference>
<dbReference type="Gene3D" id="2.10.150.10">
    <property type="entry name" value="Urease, beta subunit"/>
    <property type="match status" value="1"/>
</dbReference>
<dbReference type="HAMAP" id="MF_01954">
    <property type="entry name" value="Urease_beta"/>
    <property type="match status" value="1"/>
</dbReference>
<dbReference type="InterPro" id="IPR002019">
    <property type="entry name" value="Urease_beta-like"/>
</dbReference>
<dbReference type="InterPro" id="IPR036461">
    <property type="entry name" value="Urease_betasu_sf"/>
</dbReference>
<dbReference type="InterPro" id="IPR050069">
    <property type="entry name" value="Urease_subunit"/>
</dbReference>
<dbReference type="NCBIfam" id="NF009682">
    <property type="entry name" value="PRK13203.1"/>
    <property type="match status" value="1"/>
</dbReference>
<dbReference type="NCBIfam" id="TIGR00192">
    <property type="entry name" value="urease_beta"/>
    <property type="match status" value="1"/>
</dbReference>
<dbReference type="PANTHER" id="PTHR33569">
    <property type="entry name" value="UREASE"/>
    <property type="match status" value="1"/>
</dbReference>
<dbReference type="PANTHER" id="PTHR33569:SF1">
    <property type="entry name" value="UREASE"/>
    <property type="match status" value="1"/>
</dbReference>
<dbReference type="Pfam" id="PF00699">
    <property type="entry name" value="Urease_beta"/>
    <property type="match status" value="1"/>
</dbReference>
<dbReference type="SUPFAM" id="SSF51278">
    <property type="entry name" value="Urease, beta-subunit"/>
    <property type="match status" value="1"/>
</dbReference>
<comment type="catalytic activity">
    <reaction evidence="1">
        <text>urea + 2 H2O + H(+) = hydrogencarbonate + 2 NH4(+)</text>
        <dbReference type="Rhea" id="RHEA:20557"/>
        <dbReference type="ChEBI" id="CHEBI:15377"/>
        <dbReference type="ChEBI" id="CHEBI:15378"/>
        <dbReference type="ChEBI" id="CHEBI:16199"/>
        <dbReference type="ChEBI" id="CHEBI:17544"/>
        <dbReference type="ChEBI" id="CHEBI:28938"/>
        <dbReference type="EC" id="3.5.1.5"/>
    </reaction>
</comment>
<comment type="pathway">
    <text evidence="1">Nitrogen metabolism; urea degradation; CO(2) and NH(3) from urea (urease route): step 1/1.</text>
</comment>
<comment type="subunit">
    <text evidence="1">Heterotrimer of UreA (gamma), UreB (beta) and UreC (alpha) subunits. Three heterotrimers associate to form the active enzyme.</text>
</comment>
<comment type="subcellular location">
    <subcellularLocation>
        <location evidence="1">Cytoplasm</location>
    </subcellularLocation>
</comment>
<comment type="similarity">
    <text evidence="1">Belongs to the urease beta subunit family.</text>
</comment>
<evidence type="ECO:0000255" key="1">
    <source>
        <dbReference type="HAMAP-Rule" id="MF_01954"/>
    </source>
</evidence>
<proteinExistence type="inferred from homology"/>
<keyword id="KW-0963">Cytoplasm</keyword>
<keyword id="KW-0378">Hydrolase</keyword>
<keyword id="KW-1185">Reference proteome</keyword>
<name>URE2_ALBFT</name>
<sequence length="101" mass="10829">MIPGELFTDGPEHVLNPGRRAHTLAVVNASDRPIQVGSHYHFAETNGALGFDRAAAKGMRLNIASGSAVRLEPGQQRTVELVDYAGDRIVYGFRGLTQGAL</sequence>
<protein>
    <recommendedName>
        <fullName evidence="1">Urease subunit beta</fullName>
        <ecNumber evidence="1">3.5.1.5</ecNumber>
    </recommendedName>
    <alternativeName>
        <fullName evidence="1">Urea amidohydrolase subunit beta</fullName>
    </alternativeName>
</protein>
<feature type="chain" id="PRO_0000239897" description="Urease subunit beta">
    <location>
        <begin position="1"/>
        <end position="101"/>
    </location>
</feature>
<reference key="1">
    <citation type="submission" date="2006-02" db="EMBL/GenBank/DDBJ databases">
        <title>Complete sequence of chromosome of Rhodoferax ferrireducens DSM 15236.</title>
        <authorList>
            <person name="Copeland A."/>
            <person name="Lucas S."/>
            <person name="Lapidus A."/>
            <person name="Barry K."/>
            <person name="Detter J.C."/>
            <person name="Glavina del Rio T."/>
            <person name="Hammon N."/>
            <person name="Israni S."/>
            <person name="Pitluck S."/>
            <person name="Brettin T."/>
            <person name="Bruce D."/>
            <person name="Han C."/>
            <person name="Tapia R."/>
            <person name="Gilna P."/>
            <person name="Kiss H."/>
            <person name="Schmutz J."/>
            <person name="Larimer F."/>
            <person name="Land M."/>
            <person name="Kyrpides N."/>
            <person name="Ivanova N."/>
            <person name="Richardson P."/>
        </authorList>
    </citation>
    <scope>NUCLEOTIDE SEQUENCE [LARGE SCALE GENOMIC DNA]</scope>
    <source>
        <strain>ATCC BAA-621 / DSM 15236 / T118</strain>
    </source>
</reference>
<gene>
    <name evidence="1" type="primary">ureB</name>
    <name type="ordered locus">Rfer_3400</name>
</gene>
<organism>
    <name type="scientific">Albidiferax ferrireducens (strain ATCC BAA-621 / DSM 15236 / T118)</name>
    <name type="common">Rhodoferax ferrireducens</name>
    <dbReference type="NCBI Taxonomy" id="338969"/>
    <lineage>
        <taxon>Bacteria</taxon>
        <taxon>Pseudomonadati</taxon>
        <taxon>Pseudomonadota</taxon>
        <taxon>Betaproteobacteria</taxon>
        <taxon>Burkholderiales</taxon>
        <taxon>Comamonadaceae</taxon>
        <taxon>Rhodoferax</taxon>
    </lineage>
</organism>